<accession>A6VQW4</accession>
<organism>
    <name type="scientific">Actinobacillus succinogenes (strain ATCC 55618 / DSM 22257 / CCUG 43843 / 130Z)</name>
    <dbReference type="NCBI Taxonomy" id="339671"/>
    <lineage>
        <taxon>Bacteria</taxon>
        <taxon>Pseudomonadati</taxon>
        <taxon>Pseudomonadota</taxon>
        <taxon>Gammaproteobacteria</taxon>
        <taxon>Pasteurellales</taxon>
        <taxon>Pasteurellaceae</taxon>
        <taxon>Actinobacillus</taxon>
    </lineage>
</organism>
<proteinExistence type="inferred from homology"/>
<sequence length="224" mass="23782">MQPREIAKFIDHTALTTEKTEQDILKLCDEAVAHHFRSVCINSGYIPLAKQKLTGTGVKICTVVGFPLGANLSSVKAFEAQEAIKAGAQEVDMVINVGLIKSGKWDEVRSDIEQVLHACRGTLLKVILETCLLTKAEIVHACEICRDLNVGFVKTSTGFNKSGATVADVALMRQTVGENIGVKASGGIRDTQTTLAMINAGATRIGASAGIAIIQGLQDNNGGY</sequence>
<reference key="1">
    <citation type="journal article" date="2010" name="BMC Genomics">
        <title>A genomic perspective on the potential of Actinobacillus succinogenes for industrial succinate production.</title>
        <authorList>
            <person name="McKinlay J.B."/>
            <person name="Laivenieks M."/>
            <person name="Schindler B.D."/>
            <person name="McKinlay A.A."/>
            <person name="Siddaramappa S."/>
            <person name="Challacombe J.F."/>
            <person name="Lowry S.R."/>
            <person name="Clum A."/>
            <person name="Lapidus A.L."/>
            <person name="Burkhart K.B."/>
            <person name="Harkins V."/>
            <person name="Vieille C."/>
        </authorList>
    </citation>
    <scope>NUCLEOTIDE SEQUENCE [LARGE SCALE GENOMIC DNA]</scope>
    <source>
        <strain>ATCC 55618 / DSM 22257 / CCUG 43843 / 130Z</strain>
    </source>
</reference>
<keyword id="KW-0963">Cytoplasm</keyword>
<keyword id="KW-0456">Lyase</keyword>
<keyword id="KW-1185">Reference proteome</keyword>
<keyword id="KW-0704">Schiff base</keyword>
<gene>
    <name evidence="1" type="primary">deoC</name>
    <name type="ordered locus">Asuc_2015</name>
</gene>
<dbReference type="EC" id="4.1.2.4" evidence="1"/>
<dbReference type="EMBL" id="CP000746">
    <property type="protein sequence ID" value="ABR75361.1"/>
    <property type="molecule type" value="Genomic_DNA"/>
</dbReference>
<dbReference type="RefSeq" id="WP_012073737.1">
    <property type="nucleotide sequence ID" value="NC_009655.1"/>
</dbReference>
<dbReference type="SMR" id="A6VQW4"/>
<dbReference type="STRING" id="339671.Asuc_2015"/>
<dbReference type="KEGG" id="asu:Asuc_2015"/>
<dbReference type="eggNOG" id="COG0274">
    <property type="taxonomic scope" value="Bacteria"/>
</dbReference>
<dbReference type="HOGENOM" id="CLU_053595_0_1_6"/>
<dbReference type="OrthoDB" id="6579831at2"/>
<dbReference type="UniPathway" id="UPA00002">
    <property type="reaction ID" value="UER00468"/>
</dbReference>
<dbReference type="Proteomes" id="UP000001114">
    <property type="component" value="Chromosome"/>
</dbReference>
<dbReference type="GO" id="GO:0005737">
    <property type="term" value="C:cytoplasm"/>
    <property type="evidence" value="ECO:0007669"/>
    <property type="project" value="UniProtKB-SubCell"/>
</dbReference>
<dbReference type="GO" id="GO:0004139">
    <property type="term" value="F:deoxyribose-phosphate aldolase activity"/>
    <property type="evidence" value="ECO:0007669"/>
    <property type="project" value="UniProtKB-UniRule"/>
</dbReference>
<dbReference type="GO" id="GO:0006018">
    <property type="term" value="P:2-deoxyribose 1-phosphate catabolic process"/>
    <property type="evidence" value="ECO:0007669"/>
    <property type="project" value="UniProtKB-UniRule"/>
</dbReference>
<dbReference type="GO" id="GO:0016052">
    <property type="term" value="P:carbohydrate catabolic process"/>
    <property type="evidence" value="ECO:0007669"/>
    <property type="project" value="TreeGrafter"/>
</dbReference>
<dbReference type="GO" id="GO:0009264">
    <property type="term" value="P:deoxyribonucleotide catabolic process"/>
    <property type="evidence" value="ECO:0007669"/>
    <property type="project" value="InterPro"/>
</dbReference>
<dbReference type="CDD" id="cd00959">
    <property type="entry name" value="DeoC"/>
    <property type="match status" value="1"/>
</dbReference>
<dbReference type="FunFam" id="3.20.20.70:FF:000044">
    <property type="entry name" value="Deoxyribose-phosphate aldolase"/>
    <property type="match status" value="1"/>
</dbReference>
<dbReference type="Gene3D" id="3.20.20.70">
    <property type="entry name" value="Aldolase class I"/>
    <property type="match status" value="1"/>
</dbReference>
<dbReference type="HAMAP" id="MF_00114">
    <property type="entry name" value="DeoC_type1"/>
    <property type="match status" value="1"/>
</dbReference>
<dbReference type="InterPro" id="IPR013785">
    <property type="entry name" value="Aldolase_TIM"/>
</dbReference>
<dbReference type="InterPro" id="IPR011343">
    <property type="entry name" value="DeoC"/>
</dbReference>
<dbReference type="InterPro" id="IPR002915">
    <property type="entry name" value="DeoC/FbaB/LacD_aldolase"/>
</dbReference>
<dbReference type="InterPro" id="IPR028581">
    <property type="entry name" value="DeoC_typeI"/>
</dbReference>
<dbReference type="NCBIfam" id="TIGR00126">
    <property type="entry name" value="deoC"/>
    <property type="match status" value="1"/>
</dbReference>
<dbReference type="PANTHER" id="PTHR10889">
    <property type="entry name" value="DEOXYRIBOSE-PHOSPHATE ALDOLASE"/>
    <property type="match status" value="1"/>
</dbReference>
<dbReference type="PANTHER" id="PTHR10889:SF1">
    <property type="entry name" value="DEOXYRIBOSE-PHOSPHATE ALDOLASE"/>
    <property type="match status" value="1"/>
</dbReference>
<dbReference type="Pfam" id="PF01791">
    <property type="entry name" value="DeoC"/>
    <property type="match status" value="1"/>
</dbReference>
<dbReference type="PIRSF" id="PIRSF001357">
    <property type="entry name" value="DeoC"/>
    <property type="match status" value="1"/>
</dbReference>
<dbReference type="SMART" id="SM01133">
    <property type="entry name" value="DeoC"/>
    <property type="match status" value="1"/>
</dbReference>
<dbReference type="SUPFAM" id="SSF51569">
    <property type="entry name" value="Aldolase"/>
    <property type="match status" value="1"/>
</dbReference>
<feature type="chain" id="PRO_1000071344" description="Deoxyribose-phosphate aldolase">
    <location>
        <begin position="1"/>
        <end position="224"/>
    </location>
</feature>
<feature type="active site" description="Proton donor/acceptor" evidence="1">
    <location>
        <position position="92"/>
    </location>
</feature>
<feature type="active site" description="Schiff-base intermediate with acetaldehyde" evidence="1">
    <location>
        <position position="154"/>
    </location>
</feature>
<feature type="active site" description="Proton donor/acceptor" evidence="1">
    <location>
        <position position="183"/>
    </location>
</feature>
<evidence type="ECO:0000255" key="1">
    <source>
        <dbReference type="HAMAP-Rule" id="MF_00114"/>
    </source>
</evidence>
<comment type="function">
    <text evidence="1">Catalyzes a reversible aldol reaction between acetaldehyde and D-glyceraldehyde 3-phosphate to generate 2-deoxy-D-ribose 5-phosphate.</text>
</comment>
<comment type="catalytic activity">
    <reaction evidence="1">
        <text>2-deoxy-D-ribose 5-phosphate = D-glyceraldehyde 3-phosphate + acetaldehyde</text>
        <dbReference type="Rhea" id="RHEA:12821"/>
        <dbReference type="ChEBI" id="CHEBI:15343"/>
        <dbReference type="ChEBI" id="CHEBI:59776"/>
        <dbReference type="ChEBI" id="CHEBI:62877"/>
        <dbReference type="EC" id="4.1.2.4"/>
    </reaction>
</comment>
<comment type="pathway">
    <text evidence="1">Carbohydrate degradation; 2-deoxy-D-ribose 1-phosphate degradation; D-glyceraldehyde 3-phosphate and acetaldehyde from 2-deoxy-alpha-D-ribose 1-phosphate: step 2/2.</text>
</comment>
<comment type="subcellular location">
    <subcellularLocation>
        <location evidence="1">Cytoplasm</location>
    </subcellularLocation>
</comment>
<comment type="similarity">
    <text evidence="1">Belongs to the DeoC/FbaB aldolase family. DeoC type 1 subfamily.</text>
</comment>
<name>DEOC_ACTSZ</name>
<protein>
    <recommendedName>
        <fullName evidence="1">Deoxyribose-phosphate aldolase</fullName>
        <shortName evidence="1">DERA</shortName>
        <ecNumber evidence="1">4.1.2.4</ecNumber>
    </recommendedName>
    <alternativeName>
        <fullName evidence="1">2-deoxy-D-ribose 5-phosphate aldolase</fullName>
    </alternativeName>
    <alternativeName>
        <fullName evidence="1">Phosphodeoxyriboaldolase</fullName>
        <shortName evidence="1">Deoxyriboaldolase</shortName>
    </alternativeName>
</protein>